<comment type="function">
    <text evidence="4 6">G protein-coupled receptor that is activated by the chemokine CCL5/RANTES. Probably coupled to heterotrimeric Gq proteins, it stimulates inositol trisphosphate production and calcium mobilization upon activation. Together with CCL5/RANTES, may play a role in neuron survival through activation of a downstream signaling pathway involving the PI3, Akt and MAP kinases. CCL5/RANTES may also regulate insulin secretion by pancreatic islet cells through activation of this receptor.</text>
</comment>
<comment type="subcellular location">
    <subcellularLocation>
        <location>Cell membrane</location>
        <topology evidence="8">Multi-pass membrane protein</topology>
    </subcellularLocation>
</comment>
<comment type="tissue specificity">
    <text evidence="4 5">Highly expressed in brain and heart. Also detected in skeletal muscle, liver and kidney. Also expressed by islet cells (at protein level).</text>
</comment>
<comment type="developmental stage">
    <text evidence="4">Expressed at 7 dpc and 11 dpc. Also detected at 17 dpc.</text>
</comment>
<comment type="similarity">
    <text evidence="2">Belongs to the G-protein coupled receptor 1 family.</text>
</comment>
<comment type="sequence caution" evidence="7">
    <conflict type="erroneous initiation">
        <sequence resource="EMBL-CDS" id="BAC31978"/>
    </conflict>
    <text>Truncated N-terminus.</text>
</comment>
<keyword id="KW-1003">Cell membrane</keyword>
<keyword id="KW-0297">G-protein coupled receptor</keyword>
<keyword id="KW-0325">Glycoprotein</keyword>
<keyword id="KW-0472">Membrane</keyword>
<keyword id="KW-0675">Receptor</keyword>
<keyword id="KW-1185">Reference proteome</keyword>
<keyword id="KW-0807">Transducer</keyword>
<keyword id="KW-0812">Transmembrane</keyword>
<keyword id="KW-1133">Transmembrane helix</keyword>
<dbReference type="EMBL" id="AY253852">
    <property type="protein sequence ID" value="AAP83130.1"/>
    <property type="molecule type" value="mRNA"/>
</dbReference>
<dbReference type="EMBL" id="AK044553">
    <property type="protein sequence ID" value="BAC31978.1"/>
    <property type="status" value="ALT_INIT"/>
    <property type="molecule type" value="mRNA"/>
</dbReference>
<dbReference type="EMBL" id="AK141614">
    <property type="protein sequence ID" value="BAE24767.1"/>
    <property type="molecule type" value="mRNA"/>
</dbReference>
<dbReference type="EMBL" id="AL662891">
    <property type="status" value="NOT_ANNOTATED_CDS"/>
    <property type="molecule type" value="Genomic_DNA"/>
</dbReference>
<dbReference type="CCDS" id="CCDS24508.1"/>
<dbReference type="RefSeq" id="NP_780699.2">
    <property type="nucleotide sequence ID" value="NM_175490.4"/>
</dbReference>
<dbReference type="RefSeq" id="XP_006514759.1">
    <property type="nucleotide sequence ID" value="XM_006514696.5"/>
</dbReference>
<dbReference type="SMR" id="Q6X632"/>
<dbReference type="CORUM" id="Q6X632"/>
<dbReference type="FunCoup" id="Q6X632">
    <property type="interactions" value="999"/>
</dbReference>
<dbReference type="STRING" id="10090.ENSMUSP00000105057"/>
<dbReference type="GlyCosmos" id="Q6X632">
    <property type="glycosylation" value="3 sites, No reported glycans"/>
</dbReference>
<dbReference type="GlyGen" id="Q6X632">
    <property type="glycosylation" value="3 sites"/>
</dbReference>
<dbReference type="iPTMnet" id="Q6X632"/>
<dbReference type="PhosphoSitePlus" id="Q6X632"/>
<dbReference type="PaxDb" id="10090-ENSMUSP00000105057"/>
<dbReference type="Antibodypedia" id="15401">
    <property type="antibodies" value="418 antibodies from 33 providers"/>
</dbReference>
<dbReference type="DNASU" id="237716"/>
<dbReference type="Ensembl" id="ENSMUST00000109430.2">
    <property type="protein sequence ID" value="ENSMUSP00000105057.2"/>
    <property type="gene ID" value="ENSMUSG00000043999.7"/>
</dbReference>
<dbReference type="GeneID" id="237716"/>
<dbReference type="KEGG" id="mmu:237716"/>
<dbReference type="UCSC" id="uc007iib.2">
    <property type="organism name" value="mouse"/>
</dbReference>
<dbReference type="AGR" id="MGI:2441843"/>
<dbReference type="CTD" id="10936"/>
<dbReference type="MGI" id="MGI:2441843">
    <property type="gene designation" value="Gpr75"/>
</dbReference>
<dbReference type="VEuPathDB" id="HostDB:ENSMUSG00000043999"/>
<dbReference type="eggNOG" id="ENOG502QVED">
    <property type="taxonomic scope" value="Eukaryota"/>
</dbReference>
<dbReference type="GeneTree" id="ENSGT00390000007723"/>
<dbReference type="HOGENOM" id="CLU_041999_0_0_1"/>
<dbReference type="InParanoid" id="Q6X632"/>
<dbReference type="OMA" id="PFMGAPV"/>
<dbReference type="OrthoDB" id="8732677at2759"/>
<dbReference type="PhylomeDB" id="Q6X632"/>
<dbReference type="TreeFam" id="TF331523"/>
<dbReference type="BioGRID-ORCS" id="237716">
    <property type="hits" value="2 hits in 76 CRISPR screens"/>
</dbReference>
<dbReference type="PRO" id="PR:Q6X632"/>
<dbReference type="Proteomes" id="UP000000589">
    <property type="component" value="Chromosome 11"/>
</dbReference>
<dbReference type="RNAct" id="Q6X632">
    <property type="molecule type" value="protein"/>
</dbReference>
<dbReference type="Bgee" id="ENSMUSG00000043999">
    <property type="expression patterns" value="Expressed in lumbar dorsal root ganglion and 79 other cell types or tissues"/>
</dbReference>
<dbReference type="ExpressionAtlas" id="Q6X632">
    <property type="expression patterns" value="baseline and differential"/>
</dbReference>
<dbReference type="GO" id="GO:0005886">
    <property type="term" value="C:plasma membrane"/>
    <property type="evidence" value="ECO:0000305"/>
    <property type="project" value="UniProtKB"/>
</dbReference>
<dbReference type="GO" id="GO:0016493">
    <property type="term" value="F:C-C chemokine receptor activity"/>
    <property type="evidence" value="ECO:0000314"/>
    <property type="project" value="UniProtKB"/>
</dbReference>
<dbReference type="GO" id="GO:0004930">
    <property type="term" value="F:G protein-coupled receptor activity"/>
    <property type="evidence" value="ECO:0000314"/>
    <property type="project" value="UniProtKB"/>
</dbReference>
<dbReference type="GO" id="GO:0070098">
    <property type="term" value="P:chemokine-mediated signaling pathway"/>
    <property type="evidence" value="ECO:0000314"/>
    <property type="project" value="UniProtKB"/>
</dbReference>
<dbReference type="GO" id="GO:0007186">
    <property type="term" value="P:G protein-coupled receptor signaling pathway"/>
    <property type="evidence" value="ECO:0000314"/>
    <property type="project" value="UniProtKB"/>
</dbReference>
<dbReference type="CDD" id="cd15007">
    <property type="entry name" value="7tmA_GPR75"/>
    <property type="match status" value="1"/>
</dbReference>
<dbReference type="Gene3D" id="1.20.1070.10">
    <property type="entry name" value="Rhodopsin 7-helix transmembrane proteins"/>
    <property type="match status" value="1"/>
</dbReference>
<dbReference type="InterPro" id="IPR000276">
    <property type="entry name" value="GPCR_Rhodpsn"/>
</dbReference>
<dbReference type="InterPro" id="IPR017452">
    <property type="entry name" value="GPCR_Rhodpsn_7TM"/>
</dbReference>
<dbReference type="PANTHER" id="PTHR24228">
    <property type="entry name" value="B2 BRADYKININ RECEPTOR/ANGIOTENSIN II RECEPTOR"/>
    <property type="match status" value="1"/>
</dbReference>
<dbReference type="PANTHER" id="PTHR24228:SF55">
    <property type="entry name" value="G-PROTEIN COUPLED RECEPTOR 75-RELATED"/>
    <property type="match status" value="1"/>
</dbReference>
<dbReference type="Pfam" id="PF00001">
    <property type="entry name" value="7tm_1"/>
    <property type="match status" value="1"/>
</dbReference>
<dbReference type="PRINTS" id="PR00237">
    <property type="entry name" value="GPCRRHODOPSN"/>
</dbReference>
<dbReference type="SUPFAM" id="SSF81321">
    <property type="entry name" value="Family A G protein-coupled receptor-like"/>
    <property type="match status" value="1"/>
</dbReference>
<dbReference type="PROSITE" id="PS50262">
    <property type="entry name" value="G_PROTEIN_RECEP_F1_2"/>
    <property type="match status" value="1"/>
</dbReference>
<protein>
    <recommendedName>
        <fullName>Probable G-protein coupled receptor 75</fullName>
    </recommendedName>
</protein>
<organism>
    <name type="scientific">Mus musculus</name>
    <name type="common">Mouse</name>
    <dbReference type="NCBI Taxonomy" id="10090"/>
    <lineage>
        <taxon>Eukaryota</taxon>
        <taxon>Metazoa</taxon>
        <taxon>Chordata</taxon>
        <taxon>Craniata</taxon>
        <taxon>Vertebrata</taxon>
        <taxon>Euteleostomi</taxon>
        <taxon>Mammalia</taxon>
        <taxon>Eutheria</taxon>
        <taxon>Euarchontoglires</taxon>
        <taxon>Glires</taxon>
        <taxon>Rodentia</taxon>
        <taxon>Myomorpha</taxon>
        <taxon>Muroidea</taxon>
        <taxon>Muridae</taxon>
        <taxon>Murinae</taxon>
        <taxon>Mus</taxon>
        <taxon>Mus</taxon>
    </lineage>
</organism>
<sequence>MNTSAPLQNVPNATLLNMPPLHGGNSTSLQEGLRDFIHTATLVTCTFLLAIIFCLGSYGNFIVFLSFFDPSFRKFRTNFDFMILNLSFCDLFICGVTAPMFTFVLFFSSASSIPDSFCFTFHLTSSGFVIMSLKMVAVIALHRLRMVMGKQPNCTASFSCILLLTLLLWATSFTLATLATLRTNKSHLCLPMSSLMDGEGKAILSLYVVDFTFCVAVVSVSYIMIAQTLRKNAQVKKCPPVITVDASRPQPFMGASVKGNGDPIQCTMPALYRNQNYNKLQHSQTHGYTKNINQMPIPSASRLQLVSAINFSTAKDSKAVVTCVVIVLSVLVCCLPLGISLVQMVLSDNGSFILYQFELFGFTLIFFKSGLNPFIYSRNSAGLRRKVLWCLRYTGLGFLCCKQKTRLRAMGKGNLEINRNKSSHHETNSAYMLSPKPQRKFVDQACGPSHSKESAASPKVSAGHQPCGQSSSTPINTRIEPYYSIYNSSPSQQESGPANLPPVNSFGFASSYIAMHYYTTNDLMQEYDSTSAKQIPIPSV</sequence>
<proteinExistence type="evidence at protein level"/>
<name>GPR75_MOUSE</name>
<accession>Q6X632</accession>
<accession>Q3URC1</accession>
<accession>Q8BXP3</accession>
<gene>
    <name type="primary">Gpr75</name>
</gene>
<evidence type="ECO:0000255" key="1"/>
<evidence type="ECO:0000255" key="2">
    <source>
        <dbReference type="PROSITE-ProRule" id="PRU00521"/>
    </source>
</evidence>
<evidence type="ECO:0000256" key="3">
    <source>
        <dbReference type="SAM" id="MobiDB-lite"/>
    </source>
</evidence>
<evidence type="ECO:0000269" key="4">
    <source>
    </source>
</evidence>
<evidence type="ECO:0000269" key="5">
    <source>
    </source>
</evidence>
<evidence type="ECO:0000303" key="6">
    <source>
    </source>
</evidence>
<evidence type="ECO:0000305" key="7"/>
<evidence type="ECO:0000305" key="8">
    <source>
    </source>
</evidence>
<reference key="1">
    <citation type="journal article" date="2006" name="Br. J. Pharmacol.">
        <title>RANTES stimulates Ca2+ mobilization and inositol trisphosphate (IP3) formation in cells transfected with G protein-coupled receptor 75.</title>
        <authorList>
            <person name="Ignatov A."/>
            <person name="Robert J."/>
            <person name="Gregory-Evans C."/>
            <person name="Schaller H.C."/>
        </authorList>
    </citation>
    <scope>NUCLEOTIDE SEQUENCE [MRNA]</scope>
    <scope>FUNCTION</scope>
    <scope>TISSUE SPECIFICITY</scope>
    <scope>DEVELOPMENTAL STAGE</scope>
    <source>
        <tissue>Brain</tissue>
    </source>
</reference>
<reference key="2">
    <citation type="journal article" date="2005" name="Science">
        <title>The transcriptional landscape of the mammalian genome.</title>
        <authorList>
            <person name="Carninci P."/>
            <person name="Kasukawa T."/>
            <person name="Katayama S."/>
            <person name="Gough J."/>
            <person name="Frith M.C."/>
            <person name="Maeda N."/>
            <person name="Oyama R."/>
            <person name="Ravasi T."/>
            <person name="Lenhard B."/>
            <person name="Wells C."/>
            <person name="Kodzius R."/>
            <person name="Shimokawa K."/>
            <person name="Bajic V.B."/>
            <person name="Brenner S.E."/>
            <person name="Batalov S."/>
            <person name="Forrest A.R."/>
            <person name="Zavolan M."/>
            <person name="Davis M.J."/>
            <person name="Wilming L.G."/>
            <person name="Aidinis V."/>
            <person name="Allen J.E."/>
            <person name="Ambesi-Impiombato A."/>
            <person name="Apweiler R."/>
            <person name="Aturaliya R.N."/>
            <person name="Bailey T.L."/>
            <person name="Bansal M."/>
            <person name="Baxter L."/>
            <person name="Beisel K.W."/>
            <person name="Bersano T."/>
            <person name="Bono H."/>
            <person name="Chalk A.M."/>
            <person name="Chiu K.P."/>
            <person name="Choudhary V."/>
            <person name="Christoffels A."/>
            <person name="Clutterbuck D.R."/>
            <person name="Crowe M.L."/>
            <person name="Dalla E."/>
            <person name="Dalrymple B.P."/>
            <person name="de Bono B."/>
            <person name="Della Gatta G."/>
            <person name="di Bernardo D."/>
            <person name="Down T."/>
            <person name="Engstrom P."/>
            <person name="Fagiolini M."/>
            <person name="Faulkner G."/>
            <person name="Fletcher C.F."/>
            <person name="Fukushima T."/>
            <person name="Furuno M."/>
            <person name="Futaki S."/>
            <person name="Gariboldi M."/>
            <person name="Georgii-Hemming P."/>
            <person name="Gingeras T.R."/>
            <person name="Gojobori T."/>
            <person name="Green R.E."/>
            <person name="Gustincich S."/>
            <person name="Harbers M."/>
            <person name="Hayashi Y."/>
            <person name="Hensch T.K."/>
            <person name="Hirokawa N."/>
            <person name="Hill D."/>
            <person name="Huminiecki L."/>
            <person name="Iacono M."/>
            <person name="Ikeo K."/>
            <person name="Iwama A."/>
            <person name="Ishikawa T."/>
            <person name="Jakt M."/>
            <person name="Kanapin A."/>
            <person name="Katoh M."/>
            <person name="Kawasawa Y."/>
            <person name="Kelso J."/>
            <person name="Kitamura H."/>
            <person name="Kitano H."/>
            <person name="Kollias G."/>
            <person name="Krishnan S.P."/>
            <person name="Kruger A."/>
            <person name="Kummerfeld S.K."/>
            <person name="Kurochkin I.V."/>
            <person name="Lareau L.F."/>
            <person name="Lazarevic D."/>
            <person name="Lipovich L."/>
            <person name="Liu J."/>
            <person name="Liuni S."/>
            <person name="McWilliam S."/>
            <person name="Madan Babu M."/>
            <person name="Madera M."/>
            <person name="Marchionni L."/>
            <person name="Matsuda H."/>
            <person name="Matsuzawa S."/>
            <person name="Miki H."/>
            <person name="Mignone F."/>
            <person name="Miyake S."/>
            <person name="Morris K."/>
            <person name="Mottagui-Tabar S."/>
            <person name="Mulder N."/>
            <person name="Nakano N."/>
            <person name="Nakauchi H."/>
            <person name="Ng P."/>
            <person name="Nilsson R."/>
            <person name="Nishiguchi S."/>
            <person name="Nishikawa S."/>
            <person name="Nori F."/>
            <person name="Ohara O."/>
            <person name="Okazaki Y."/>
            <person name="Orlando V."/>
            <person name="Pang K.C."/>
            <person name="Pavan W.J."/>
            <person name="Pavesi G."/>
            <person name="Pesole G."/>
            <person name="Petrovsky N."/>
            <person name="Piazza S."/>
            <person name="Reed J."/>
            <person name="Reid J.F."/>
            <person name="Ring B.Z."/>
            <person name="Ringwald M."/>
            <person name="Rost B."/>
            <person name="Ruan Y."/>
            <person name="Salzberg S.L."/>
            <person name="Sandelin A."/>
            <person name="Schneider C."/>
            <person name="Schoenbach C."/>
            <person name="Sekiguchi K."/>
            <person name="Semple C.A."/>
            <person name="Seno S."/>
            <person name="Sessa L."/>
            <person name="Sheng Y."/>
            <person name="Shibata Y."/>
            <person name="Shimada H."/>
            <person name="Shimada K."/>
            <person name="Silva D."/>
            <person name="Sinclair B."/>
            <person name="Sperling S."/>
            <person name="Stupka E."/>
            <person name="Sugiura K."/>
            <person name="Sultana R."/>
            <person name="Takenaka Y."/>
            <person name="Taki K."/>
            <person name="Tammoja K."/>
            <person name="Tan S.L."/>
            <person name="Tang S."/>
            <person name="Taylor M.S."/>
            <person name="Tegner J."/>
            <person name="Teichmann S.A."/>
            <person name="Ueda H.R."/>
            <person name="van Nimwegen E."/>
            <person name="Verardo R."/>
            <person name="Wei C.L."/>
            <person name="Yagi K."/>
            <person name="Yamanishi H."/>
            <person name="Zabarovsky E."/>
            <person name="Zhu S."/>
            <person name="Zimmer A."/>
            <person name="Hide W."/>
            <person name="Bult C."/>
            <person name="Grimmond S.M."/>
            <person name="Teasdale R.D."/>
            <person name="Liu E.T."/>
            <person name="Brusic V."/>
            <person name="Quackenbush J."/>
            <person name="Wahlestedt C."/>
            <person name="Mattick J.S."/>
            <person name="Hume D.A."/>
            <person name="Kai C."/>
            <person name="Sasaki D."/>
            <person name="Tomaru Y."/>
            <person name="Fukuda S."/>
            <person name="Kanamori-Katayama M."/>
            <person name="Suzuki M."/>
            <person name="Aoki J."/>
            <person name="Arakawa T."/>
            <person name="Iida J."/>
            <person name="Imamura K."/>
            <person name="Itoh M."/>
            <person name="Kato T."/>
            <person name="Kawaji H."/>
            <person name="Kawagashira N."/>
            <person name="Kawashima T."/>
            <person name="Kojima M."/>
            <person name="Kondo S."/>
            <person name="Konno H."/>
            <person name="Nakano K."/>
            <person name="Ninomiya N."/>
            <person name="Nishio T."/>
            <person name="Okada M."/>
            <person name="Plessy C."/>
            <person name="Shibata K."/>
            <person name="Shiraki T."/>
            <person name="Suzuki S."/>
            <person name="Tagami M."/>
            <person name="Waki K."/>
            <person name="Watahiki A."/>
            <person name="Okamura-Oho Y."/>
            <person name="Suzuki H."/>
            <person name="Kawai J."/>
            <person name="Hayashizaki Y."/>
        </authorList>
    </citation>
    <scope>NUCLEOTIDE SEQUENCE [LARGE SCALE MRNA]</scope>
    <source>
        <strain>C57BL/6J</strain>
        <tissue>Hippocampus</tissue>
        <tissue>Retina</tissue>
    </source>
</reference>
<reference key="3">
    <citation type="journal article" date="2009" name="PLoS Biol.">
        <title>Lineage-specific biology revealed by a finished genome assembly of the mouse.</title>
        <authorList>
            <person name="Church D.M."/>
            <person name="Goodstadt L."/>
            <person name="Hillier L.W."/>
            <person name="Zody M.C."/>
            <person name="Goldstein S."/>
            <person name="She X."/>
            <person name="Bult C.J."/>
            <person name="Agarwala R."/>
            <person name="Cherry J.L."/>
            <person name="DiCuccio M."/>
            <person name="Hlavina W."/>
            <person name="Kapustin Y."/>
            <person name="Meric P."/>
            <person name="Maglott D."/>
            <person name="Birtle Z."/>
            <person name="Marques A.C."/>
            <person name="Graves T."/>
            <person name="Zhou S."/>
            <person name="Teague B."/>
            <person name="Potamousis K."/>
            <person name="Churas C."/>
            <person name="Place M."/>
            <person name="Herschleb J."/>
            <person name="Runnheim R."/>
            <person name="Forrest D."/>
            <person name="Amos-Landgraf J."/>
            <person name="Schwartz D.C."/>
            <person name="Cheng Z."/>
            <person name="Lindblad-Toh K."/>
            <person name="Eichler E.E."/>
            <person name="Ponting C.P."/>
        </authorList>
    </citation>
    <scope>NUCLEOTIDE SEQUENCE [LARGE SCALE GENOMIC DNA]</scope>
    <source>
        <strain>C57BL/6J</strain>
    </source>
</reference>
<reference key="4">
    <citation type="journal article" date="2013" name="Diabetologia">
        <title>The novel chemokine receptor, G-protein-coupled receptor 75, is expressed by islets and is coupled to stimulation of insulin secretion and improved glucose homeostasis.</title>
        <authorList>
            <person name="Liu B."/>
            <person name="Hassan Z."/>
            <person name="Amisten S."/>
            <person name="King A.J."/>
            <person name="Bowe J.E."/>
            <person name="Huang G.C."/>
            <person name="Jones P.M."/>
            <person name="Persaud S.J."/>
        </authorList>
    </citation>
    <scope>FUNCTION</scope>
    <scope>TISSUE SPECIFICITY</scope>
</reference>
<feature type="chain" id="PRO_0000069584" description="Probable G-protein coupled receptor 75">
    <location>
        <begin position="1"/>
        <end position="540"/>
    </location>
</feature>
<feature type="topological domain" description="Extracellular" evidence="1">
    <location>
        <begin position="1"/>
        <end position="46"/>
    </location>
</feature>
<feature type="transmembrane region" description="Helical; Name=1" evidence="1">
    <location>
        <begin position="47"/>
        <end position="67"/>
    </location>
</feature>
<feature type="topological domain" description="Cytoplasmic" evidence="1">
    <location>
        <begin position="68"/>
        <end position="86"/>
    </location>
</feature>
<feature type="transmembrane region" description="Helical; Name=2" evidence="1">
    <location>
        <begin position="87"/>
        <end position="107"/>
    </location>
</feature>
<feature type="topological domain" description="Extracellular" evidence="1">
    <location>
        <begin position="108"/>
        <end position="120"/>
    </location>
</feature>
<feature type="transmembrane region" description="Helical; Name=3" evidence="1">
    <location>
        <begin position="121"/>
        <end position="141"/>
    </location>
</feature>
<feature type="topological domain" description="Cytoplasmic" evidence="1">
    <location>
        <begin position="142"/>
        <end position="160"/>
    </location>
</feature>
<feature type="transmembrane region" description="Helical; Name=4" evidence="1">
    <location>
        <begin position="161"/>
        <end position="181"/>
    </location>
</feature>
<feature type="topological domain" description="Extracellular" evidence="1">
    <location>
        <begin position="182"/>
        <end position="205"/>
    </location>
</feature>
<feature type="transmembrane region" description="Helical; Name=5" evidence="1">
    <location>
        <begin position="206"/>
        <end position="226"/>
    </location>
</feature>
<feature type="topological domain" description="Cytoplasmic" evidence="1">
    <location>
        <begin position="227"/>
        <end position="318"/>
    </location>
</feature>
<feature type="transmembrane region" description="Helical; Name=6" evidence="1">
    <location>
        <begin position="319"/>
        <end position="339"/>
    </location>
</feature>
<feature type="topological domain" description="Extracellular" evidence="1">
    <location>
        <begin position="340"/>
        <end position="350"/>
    </location>
</feature>
<feature type="transmembrane region" description="Helical; Name=7" evidence="1">
    <location>
        <begin position="351"/>
        <end position="371"/>
    </location>
</feature>
<feature type="topological domain" description="Cytoplasmic" evidence="1">
    <location>
        <begin position="372"/>
        <end position="540"/>
    </location>
</feature>
<feature type="region of interest" description="Disordered" evidence="3">
    <location>
        <begin position="443"/>
        <end position="475"/>
    </location>
</feature>
<feature type="glycosylation site" description="N-linked (GlcNAc...) asparagine" evidence="1">
    <location>
        <position position="2"/>
    </location>
</feature>
<feature type="glycosylation site" description="N-linked (GlcNAc...) asparagine" evidence="1">
    <location>
        <position position="25"/>
    </location>
</feature>
<feature type="glycosylation site" description="N-linked (GlcNAc...) asparagine" evidence="1">
    <location>
        <position position="184"/>
    </location>
</feature>
<feature type="sequence conflict" description="In Ref. 2; BAC31978." evidence="7" ref="2">
    <original>N</original>
    <variation>D</variation>
    <location>
        <position position="476"/>
    </location>
</feature>